<feature type="chain" id="PRO_0000285613" description="Coatomer subunit zeta-1">
    <location>
        <begin position="1"/>
        <end position="177"/>
    </location>
</feature>
<keyword id="KW-0963">Cytoplasm</keyword>
<keyword id="KW-0968">Cytoplasmic vesicle</keyword>
<keyword id="KW-0931">ER-Golgi transport</keyword>
<keyword id="KW-0333">Golgi apparatus</keyword>
<keyword id="KW-0472">Membrane</keyword>
<keyword id="KW-0653">Protein transport</keyword>
<keyword id="KW-1185">Reference proteome</keyword>
<keyword id="KW-0813">Transport</keyword>
<name>COPZ1_ORYSJ</name>
<proteinExistence type="evidence at transcript level"/>
<sequence length="177" mass="19369">MESCPSVKNILLLDSEGKRVAVKYYTDDWPTLSAKLAFEKSVFVKTQKATAGAEAEIVMFDGHIVVYKFIQDLHFFVTGGEEENELILASVLQGFTDAVDIILRNNVDKRTALENLDLILLCLDEIVDGGIVLETEGSVIAEKVSAHGIEGATSLAEQTIVQALTTAREHLTKSLLM</sequence>
<protein>
    <recommendedName>
        <fullName>Coatomer subunit zeta-1</fullName>
    </recommendedName>
    <alternativeName>
        <fullName>Zeta-1-coat protein</fullName>
    </alternativeName>
    <alternativeName>
        <fullName>Zeta-COP 1</fullName>
    </alternativeName>
    <alternativeName>
        <fullName>Zeta1-COP</fullName>
    </alternativeName>
</protein>
<accession>Q9MAX5</accession>
<accession>A3B4T7</accession>
<accession>B7E3G5</accession>
<evidence type="ECO:0000250" key="1"/>
<evidence type="ECO:0000250" key="2">
    <source>
        <dbReference type="UniProtKB" id="P53600"/>
    </source>
</evidence>
<evidence type="ECO:0000305" key="3"/>
<evidence type="ECO:0000312" key="4">
    <source>
        <dbReference type="EMBL" id="EEE63990.1"/>
    </source>
</evidence>
<gene>
    <name type="primary">COPZ1</name>
    <name type="ordered locus">Os05g0461000</name>
    <name type="ordered locus">LOC_Os05g38610</name>
    <name type="ORF">OJ1281_H05.11</name>
    <name type="ORF">OsJ_018059</name>
    <name evidence="4" type="ORF">OsJ_18819</name>
</gene>
<dbReference type="EMBL" id="AB042259">
    <property type="protein sequence ID" value="BAA95144.1"/>
    <property type="molecule type" value="mRNA"/>
</dbReference>
<dbReference type="EMBL" id="AC117265">
    <property type="protein sequence ID" value="AAT39171.1"/>
    <property type="molecule type" value="Genomic_DNA"/>
</dbReference>
<dbReference type="EMBL" id="AP008211">
    <property type="protein sequence ID" value="BAF17674.1"/>
    <property type="molecule type" value="Genomic_DNA"/>
</dbReference>
<dbReference type="EMBL" id="AP014961">
    <property type="protein sequence ID" value="BAS94410.1"/>
    <property type="molecule type" value="Genomic_DNA"/>
</dbReference>
<dbReference type="EMBL" id="CM000142">
    <property type="protein sequence ID" value="EEE63990.1"/>
    <property type="molecule type" value="Genomic_DNA"/>
</dbReference>
<dbReference type="EMBL" id="AK059189">
    <property type="protein sequence ID" value="BAG86912.1"/>
    <property type="molecule type" value="mRNA"/>
</dbReference>
<dbReference type="EMBL" id="AK066739">
    <property type="protein sequence ID" value="BAG90106.1"/>
    <property type="molecule type" value="mRNA"/>
</dbReference>
<dbReference type="EMBL" id="AK104166">
    <property type="protein sequence ID" value="BAG96470.1"/>
    <property type="molecule type" value="mRNA"/>
</dbReference>
<dbReference type="RefSeq" id="XP_015637739.1">
    <property type="nucleotide sequence ID" value="XM_015782253.1"/>
</dbReference>
<dbReference type="SMR" id="Q9MAX5"/>
<dbReference type="FunCoup" id="Q9MAX5">
    <property type="interactions" value="2989"/>
</dbReference>
<dbReference type="STRING" id="39947.Q9MAX5"/>
<dbReference type="PaxDb" id="39947-Q9MAX5"/>
<dbReference type="EnsemblPlants" id="Os05t0461000-01">
    <property type="protein sequence ID" value="Os05t0461000-01"/>
    <property type="gene ID" value="Os05g0461000"/>
</dbReference>
<dbReference type="EnsemblPlants" id="Os05t0461000-02">
    <property type="protein sequence ID" value="Os05t0461000-02"/>
    <property type="gene ID" value="Os05g0461000"/>
</dbReference>
<dbReference type="Gramene" id="Os05t0461000-01">
    <property type="protein sequence ID" value="Os05t0461000-01"/>
    <property type="gene ID" value="Os05g0461000"/>
</dbReference>
<dbReference type="Gramene" id="Os05t0461000-02">
    <property type="protein sequence ID" value="Os05t0461000-02"/>
    <property type="gene ID" value="Os05g0461000"/>
</dbReference>
<dbReference type="KEGG" id="dosa:Os05g0461000"/>
<dbReference type="eggNOG" id="KOG3343">
    <property type="taxonomic scope" value="Eukaryota"/>
</dbReference>
<dbReference type="HOGENOM" id="CLU_086803_1_1_1"/>
<dbReference type="InParanoid" id="Q9MAX5"/>
<dbReference type="OMA" id="NRIMARY"/>
<dbReference type="OrthoDB" id="10249988at2759"/>
<dbReference type="Proteomes" id="UP000000763">
    <property type="component" value="Chromosome 5"/>
</dbReference>
<dbReference type="Proteomes" id="UP000007752">
    <property type="component" value="Chromosome 5"/>
</dbReference>
<dbReference type="Proteomes" id="UP000059680">
    <property type="component" value="Chromosome 5"/>
</dbReference>
<dbReference type="GO" id="GO:0030126">
    <property type="term" value="C:COPI vesicle coat"/>
    <property type="evidence" value="ECO:0000318"/>
    <property type="project" value="GO_Central"/>
</dbReference>
<dbReference type="GO" id="GO:0000139">
    <property type="term" value="C:Golgi membrane"/>
    <property type="evidence" value="ECO:0007669"/>
    <property type="project" value="UniProtKB-SubCell"/>
</dbReference>
<dbReference type="GO" id="GO:0006891">
    <property type="term" value="P:intra-Golgi vesicle-mediated transport"/>
    <property type="evidence" value="ECO:0000318"/>
    <property type="project" value="GO_Central"/>
</dbReference>
<dbReference type="GO" id="GO:0006886">
    <property type="term" value="P:intracellular protein transport"/>
    <property type="evidence" value="ECO:0000318"/>
    <property type="project" value="GO_Central"/>
</dbReference>
<dbReference type="GO" id="GO:0006890">
    <property type="term" value="P:retrograde vesicle-mediated transport, Golgi to endoplasmic reticulum"/>
    <property type="evidence" value="ECO:0000318"/>
    <property type="project" value="GO_Central"/>
</dbReference>
<dbReference type="CDD" id="cd14829">
    <property type="entry name" value="Zeta-COP"/>
    <property type="match status" value="1"/>
</dbReference>
<dbReference type="FunFam" id="3.30.450.60:FF:000014">
    <property type="entry name" value="Coatomer subunit zeta-2"/>
    <property type="match status" value="1"/>
</dbReference>
<dbReference type="Gene3D" id="3.30.450.60">
    <property type="match status" value="1"/>
</dbReference>
<dbReference type="InterPro" id="IPR022775">
    <property type="entry name" value="AP_mu_sigma_su"/>
</dbReference>
<dbReference type="InterPro" id="IPR039652">
    <property type="entry name" value="Coatomer_zeta"/>
</dbReference>
<dbReference type="InterPro" id="IPR011012">
    <property type="entry name" value="Longin-like_dom_sf"/>
</dbReference>
<dbReference type="PANTHER" id="PTHR11043:SF32">
    <property type="entry name" value="COATOMER SUBUNIT ZETA-1"/>
    <property type="match status" value="1"/>
</dbReference>
<dbReference type="PANTHER" id="PTHR11043">
    <property type="entry name" value="ZETA-COAT PROTEIN"/>
    <property type="match status" value="1"/>
</dbReference>
<dbReference type="Pfam" id="PF01217">
    <property type="entry name" value="Clat_adaptor_s"/>
    <property type="match status" value="1"/>
</dbReference>
<dbReference type="SUPFAM" id="SSF64356">
    <property type="entry name" value="SNARE-like"/>
    <property type="match status" value="1"/>
</dbReference>
<comment type="function">
    <text evidence="2">The coatomer is a cytosolic protein complex that binds to dilysine motifs and reversibly associates with Golgi non-clathrin-coated vesicles, which further mediate biosynthetic protein transport from the ER, via the Golgi up to the trans Golgi network. Coatomer complex is required for budding from Golgi membranes, and is essential for the retrograde Golgi-to-ER transport of dilysine-tagged proteins (By similarity). The zeta subunit may be involved in regulating the coat assembly and, hence, the rate of biosynthetic protein transport due to its association-dissociation properties with the coatomer complex (By similarity).</text>
</comment>
<comment type="subunit">
    <text evidence="1">Oligomeric complex that consists of at least the alpha, beta, beta', gamma, delta, epsilon and zeta subunits.</text>
</comment>
<comment type="subcellular location">
    <subcellularLocation>
        <location evidence="1">Cytoplasm</location>
    </subcellularLocation>
    <subcellularLocation>
        <location evidence="1">Golgi apparatus membrane</location>
        <topology evidence="1">Peripheral membrane protein</topology>
        <orientation evidence="1">Cytoplasmic side</orientation>
    </subcellularLocation>
    <subcellularLocation>
        <location evidence="1">Cytoplasmic vesicle</location>
        <location evidence="1">COPI-coated vesicle membrane</location>
        <topology evidence="1">Peripheral membrane protein</topology>
        <orientation evidence="1">Cytoplasmic side</orientation>
    </subcellularLocation>
    <text evidence="1">The coatomer is cytoplasmic or polymerized on the cytoplasmic side of the Golgi, as well as on the vesicles/buds originating from it.</text>
</comment>
<comment type="similarity">
    <text evidence="3">Belongs to the adaptor complexes small subunit family.</text>
</comment>
<reference key="1">
    <citation type="submission" date="2000-04" db="EMBL/GenBank/DDBJ databases">
        <title>Identification of zeta-COP genes from various organisms.</title>
        <authorList>
            <person name="Hahn Y."/>
            <person name="Chung J.H."/>
        </authorList>
    </citation>
    <scope>NUCLEOTIDE SEQUENCE [MRNA]</scope>
    <source>
        <strain>cv. Nipponbare</strain>
    </source>
</reference>
<reference key="2">
    <citation type="journal article" date="2005" name="Mol. Genet. Genomics">
        <title>A fine physical map of the rice chromosome 5.</title>
        <authorList>
            <person name="Cheng C.-H."/>
            <person name="Chung M.C."/>
            <person name="Liu S.-M."/>
            <person name="Chen S.-K."/>
            <person name="Kao F.Y."/>
            <person name="Lin S.-J."/>
            <person name="Hsiao S.-H."/>
            <person name="Tseng I.C."/>
            <person name="Hsing Y.-I.C."/>
            <person name="Wu H.-P."/>
            <person name="Chen C.-S."/>
            <person name="Shaw J.-F."/>
            <person name="Wu J."/>
            <person name="Matsumoto T."/>
            <person name="Sasaki T."/>
            <person name="Chen H.-C."/>
            <person name="Chow T.-Y."/>
        </authorList>
    </citation>
    <scope>NUCLEOTIDE SEQUENCE [LARGE SCALE GENOMIC DNA]</scope>
    <source>
        <strain>cv. Nipponbare</strain>
    </source>
</reference>
<reference key="3">
    <citation type="journal article" date="2005" name="Nature">
        <title>The map-based sequence of the rice genome.</title>
        <authorList>
            <consortium name="International rice genome sequencing project (IRGSP)"/>
        </authorList>
    </citation>
    <scope>NUCLEOTIDE SEQUENCE [LARGE SCALE GENOMIC DNA]</scope>
    <source>
        <strain>cv. Nipponbare</strain>
    </source>
</reference>
<reference key="4">
    <citation type="journal article" date="2008" name="Nucleic Acids Res.">
        <title>The rice annotation project database (RAP-DB): 2008 update.</title>
        <authorList>
            <consortium name="The rice annotation project (RAP)"/>
        </authorList>
    </citation>
    <scope>GENOME REANNOTATION</scope>
    <source>
        <strain>cv. Nipponbare</strain>
    </source>
</reference>
<reference key="5">
    <citation type="journal article" date="2013" name="Rice">
        <title>Improvement of the Oryza sativa Nipponbare reference genome using next generation sequence and optical map data.</title>
        <authorList>
            <person name="Kawahara Y."/>
            <person name="de la Bastide M."/>
            <person name="Hamilton J.P."/>
            <person name="Kanamori H."/>
            <person name="McCombie W.R."/>
            <person name="Ouyang S."/>
            <person name="Schwartz D.C."/>
            <person name="Tanaka T."/>
            <person name="Wu J."/>
            <person name="Zhou S."/>
            <person name="Childs K.L."/>
            <person name="Davidson R.M."/>
            <person name="Lin H."/>
            <person name="Quesada-Ocampo L."/>
            <person name="Vaillancourt B."/>
            <person name="Sakai H."/>
            <person name="Lee S.S."/>
            <person name="Kim J."/>
            <person name="Numa H."/>
            <person name="Itoh T."/>
            <person name="Buell C.R."/>
            <person name="Matsumoto T."/>
        </authorList>
    </citation>
    <scope>GENOME REANNOTATION</scope>
    <source>
        <strain>cv. Nipponbare</strain>
    </source>
</reference>
<reference key="6">
    <citation type="journal article" date="2005" name="PLoS Biol.">
        <title>The genomes of Oryza sativa: a history of duplications.</title>
        <authorList>
            <person name="Yu J."/>
            <person name="Wang J."/>
            <person name="Lin W."/>
            <person name="Li S."/>
            <person name="Li H."/>
            <person name="Zhou J."/>
            <person name="Ni P."/>
            <person name="Dong W."/>
            <person name="Hu S."/>
            <person name="Zeng C."/>
            <person name="Zhang J."/>
            <person name="Zhang Y."/>
            <person name="Li R."/>
            <person name="Xu Z."/>
            <person name="Li S."/>
            <person name="Li X."/>
            <person name="Zheng H."/>
            <person name="Cong L."/>
            <person name="Lin L."/>
            <person name="Yin J."/>
            <person name="Geng J."/>
            <person name="Li G."/>
            <person name="Shi J."/>
            <person name="Liu J."/>
            <person name="Lv H."/>
            <person name="Li J."/>
            <person name="Wang J."/>
            <person name="Deng Y."/>
            <person name="Ran L."/>
            <person name="Shi X."/>
            <person name="Wang X."/>
            <person name="Wu Q."/>
            <person name="Li C."/>
            <person name="Ren X."/>
            <person name="Wang J."/>
            <person name="Wang X."/>
            <person name="Li D."/>
            <person name="Liu D."/>
            <person name="Zhang X."/>
            <person name="Ji Z."/>
            <person name="Zhao W."/>
            <person name="Sun Y."/>
            <person name="Zhang Z."/>
            <person name="Bao J."/>
            <person name="Han Y."/>
            <person name="Dong L."/>
            <person name="Ji J."/>
            <person name="Chen P."/>
            <person name="Wu S."/>
            <person name="Liu J."/>
            <person name="Xiao Y."/>
            <person name="Bu D."/>
            <person name="Tan J."/>
            <person name="Yang L."/>
            <person name="Ye C."/>
            <person name="Zhang J."/>
            <person name="Xu J."/>
            <person name="Zhou Y."/>
            <person name="Yu Y."/>
            <person name="Zhang B."/>
            <person name="Zhuang S."/>
            <person name="Wei H."/>
            <person name="Liu B."/>
            <person name="Lei M."/>
            <person name="Yu H."/>
            <person name="Li Y."/>
            <person name="Xu H."/>
            <person name="Wei S."/>
            <person name="He X."/>
            <person name="Fang L."/>
            <person name="Zhang Z."/>
            <person name="Zhang Y."/>
            <person name="Huang X."/>
            <person name="Su Z."/>
            <person name="Tong W."/>
            <person name="Li J."/>
            <person name="Tong Z."/>
            <person name="Li S."/>
            <person name="Ye J."/>
            <person name="Wang L."/>
            <person name="Fang L."/>
            <person name="Lei T."/>
            <person name="Chen C.-S."/>
            <person name="Chen H.-C."/>
            <person name="Xu Z."/>
            <person name="Li H."/>
            <person name="Huang H."/>
            <person name="Zhang F."/>
            <person name="Xu H."/>
            <person name="Li N."/>
            <person name="Zhao C."/>
            <person name="Li S."/>
            <person name="Dong L."/>
            <person name="Huang Y."/>
            <person name="Li L."/>
            <person name="Xi Y."/>
            <person name="Qi Q."/>
            <person name="Li W."/>
            <person name="Zhang B."/>
            <person name="Hu W."/>
            <person name="Zhang Y."/>
            <person name="Tian X."/>
            <person name="Jiao Y."/>
            <person name="Liang X."/>
            <person name="Jin J."/>
            <person name="Gao L."/>
            <person name="Zheng W."/>
            <person name="Hao B."/>
            <person name="Liu S.-M."/>
            <person name="Wang W."/>
            <person name="Yuan L."/>
            <person name="Cao M."/>
            <person name="McDermott J."/>
            <person name="Samudrala R."/>
            <person name="Wang J."/>
            <person name="Wong G.K.-S."/>
            <person name="Yang H."/>
        </authorList>
    </citation>
    <scope>NUCLEOTIDE SEQUENCE [LARGE SCALE GENOMIC DNA]</scope>
    <source>
        <strain>cv. Nipponbare</strain>
    </source>
</reference>
<reference key="7">
    <citation type="journal article" date="2003" name="Science">
        <title>Collection, mapping, and annotation of over 28,000 cDNA clones from japonica rice.</title>
        <authorList>
            <consortium name="The rice full-length cDNA consortium"/>
        </authorList>
    </citation>
    <scope>NUCLEOTIDE SEQUENCE [LARGE SCALE MRNA]</scope>
    <source>
        <strain>cv. Nipponbare</strain>
    </source>
</reference>
<organism>
    <name type="scientific">Oryza sativa subsp. japonica</name>
    <name type="common">Rice</name>
    <dbReference type="NCBI Taxonomy" id="39947"/>
    <lineage>
        <taxon>Eukaryota</taxon>
        <taxon>Viridiplantae</taxon>
        <taxon>Streptophyta</taxon>
        <taxon>Embryophyta</taxon>
        <taxon>Tracheophyta</taxon>
        <taxon>Spermatophyta</taxon>
        <taxon>Magnoliopsida</taxon>
        <taxon>Liliopsida</taxon>
        <taxon>Poales</taxon>
        <taxon>Poaceae</taxon>
        <taxon>BOP clade</taxon>
        <taxon>Oryzoideae</taxon>
        <taxon>Oryzeae</taxon>
        <taxon>Oryzinae</taxon>
        <taxon>Oryza</taxon>
        <taxon>Oryza sativa</taxon>
    </lineage>
</organism>